<feature type="chain" id="PRO_0000326730" description="Acylphosphatase">
    <location>
        <begin position="1"/>
        <end position="90"/>
    </location>
</feature>
<feature type="domain" description="Acylphosphatase-like" evidence="1">
    <location>
        <begin position="3"/>
        <end position="90"/>
    </location>
</feature>
<feature type="active site" evidence="1">
    <location>
        <position position="18"/>
    </location>
</feature>
<feature type="active site" evidence="1">
    <location>
        <position position="36"/>
    </location>
</feature>
<name>ACYP_LIGS1</name>
<accession>Q1WUK1</accession>
<organism>
    <name type="scientific">Ligilactobacillus salivarius (strain UCC118)</name>
    <name type="common">Lactobacillus salivarius</name>
    <dbReference type="NCBI Taxonomy" id="362948"/>
    <lineage>
        <taxon>Bacteria</taxon>
        <taxon>Bacillati</taxon>
        <taxon>Bacillota</taxon>
        <taxon>Bacilli</taxon>
        <taxon>Lactobacillales</taxon>
        <taxon>Lactobacillaceae</taxon>
        <taxon>Ligilactobacillus</taxon>
    </lineage>
</organism>
<evidence type="ECO:0000255" key="1">
    <source>
        <dbReference type="PROSITE-ProRule" id="PRU00520"/>
    </source>
</evidence>
<evidence type="ECO:0000305" key="2"/>
<gene>
    <name type="primary">acyP</name>
    <name type="ordered locus">LSL_0525</name>
</gene>
<protein>
    <recommendedName>
        <fullName>Acylphosphatase</fullName>
        <ecNumber>3.6.1.7</ecNumber>
    </recommendedName>
    <alternativeName>
        <fullName>Acylphosphate phosphohydrolase</fullName>
    </alternativeName>
</protein>
<sequence>MKNYKIIVFGTVQGVGFRYTTKAIADNMGIKGIVRNQSDGTVYIEAQGNSLLLSQFISSIKAPKNPFAKVTKIDVSEIPVKTYNDFSVTY</sequence>
<dbReference type="EC" id="3.6.1.7"/>
<dbReference type="EMBL" id="CP000233">
    <property type="protein sequence ID" value="ABD99334.1"/>
    <property type="molecule type" value="Genomic_DNA"/>
</dbReference>
<dbReference type="RefSeq" id="WP_011475805.1">
    <property type="nucleotide sequence ID" value="NC_007929.1"/>
</dbReference>
<dbReference type="RefSeq" id="YP_535417.1">
    <property type="nucleotide sequence ID" value="NC_007929.1"/>
</dbReference>
<dbReference type="SMR" id="Q1WUK1"/>
<dbReference type="STRING" id="362948.LSL_0525"/>
<dbReference type="KEGG" id="lsl:LSL_0525"/>
<dbReference type="PATRIC" id="fig|362948.14.peg.603"/>
<dbReference type="HOGENOM" id="CLU_141932_2_1_9"/>
<dbReference type="OrthoDB" id="9808093at2"/>
<dbReference type="Proteomes" id="UP000006559">
    <property type="component" value="Chromosome"/>
</dbReference>
<dbReference type="GO" id="GO:0003998">
    <property type="term" value="F:acylphosphatase activity"/>
    <property type="evidence" value="ECO:0007669"/>
    <property type="project" value="UniProtKB-EC"/>
</dbReference>
<dbReference type="Gene3D" id="3.30.70.100">
    <property type="match status" value="1"/>
</dbReference>
<dbReference type="InterPro" id="IPR020456">
    <property type="entry name" value="Acylphosphatase"/>
</dbReference>
<dbReference type="InterPro" id="IPR001792">
    <property type="entry name" value="Acylphosphatase-like_dom"/>
</dbReference>
<dbReference type="InterPro" id="IPR036046">
    <property type="entry name" value="Acylphosphatase-like_dom_sf"/>
</dbReference>
<dbReference type="InterPro" id="IPR017968">
    <property type="entry name" value="Acylphosphatase_CS"/>
</dbReference>
<dbReference type="PANTHER" id="PTHR47268">
    <property type="entry name" value="ACYLPHOSPHATASE"/>
    <property type="match status" value="1"/>
</dbReference>
<dbReference type="PANTHER" id="PTHR47268:SF4">
    <property type="entry name" value="ACYLPHOSPHATASE"/>
    <property type="match status" value="1"/>
</dbReference>
<dbReference type="Pfam" id="PF00708">
    <property type="entry name" value="Acylphosphatase"/>
    <property type="match status" value="1"/>
</dbReference>
<dbReference type="SUPFAM" id="SSF54975">
    <property type="entry name" value="Acylphosphatase/BLUF domain-like"/>
    <property type="match status" value="1"/>
</dbReference>
<dbReference type="PROSITE" id="PS00150">
    <property type="entry name" value="ACYLPHOSPHATASE_1"/>
    <property type="match status" value="1"/>
</dbReference>
<dbReference type="PROSITE" id="PS51160">
    <property type="entry name" value="ACYLPHOSPHATASE_3"/>
    <property type="match status" value="1"/>
</dbReference>
<keyword id="KW-0378">Hydrolase</keyword>
<keyword id="KW-1185">Reference proteome</keyword>
<comment type="catalytic activity">
    <reaction>
        <text>an acyl phosphate + H2O = a carboxylate + phosphate + H(+)</text>
        <dbReference type="Rhea" id="RHEA:14965"/>
        <dbReference type="ChEBI" id="CHEBI:15377"/>
        <dbReference type="ChEBI" id="CHEBI:15378"/>
        <dbReference type="ChEBI" id="CHEBI:29067"/>
        <dbReference type="ChEBI" id="CHEBI:43474"/>
        <dbReference type="ChEBI" id="CHEBI:59918"/>
        <dbReference type="EC" id="3.6.1.7"/>
    </reaction>
</comment>
<comment type="similarity">
    <text evidence="2">Belongs to the acylphosphatase family.</text>
</comment>
<reference key="1">
    <citation type="journal article" date="2006" name="Proc. Natl. Acad. Sci. U.S.A.">
        <title>Multireplicon genome architecture of Lactobacillus salivarius.</title>
        <authorList>
            <person name="Claesson M.J."/>
            <person name="Li Y."/>
            <person name="Leahy S."/>
            <person name="Canchaya C."/>
            <person name="van Pijkeren J.P."/>
            <person name="Cerdeno-Tarraga A.M."/>
            <person name="Parkhill J."/>
            <person name="Flynn S."/>
            <person name="O'Sullivan G.C."/>
            <person name="Collins J.K."/>
            <person name="Higgins D."/>
            <person name="Shanahan F."/>
            <person name="Fitzgerald G.F."/>
            <person name="van Sinderen D."/>
            <person name="O'Toole P.W."/>
        </authorList>
    </citation>
    <scope>NUCLEOTIDE SEQUENCE [LARGE SCALE GENOMIC DNA]</scope>
    <source>
        <strain>UCC118</strain>
    </source>
</reference>
<proteinExistence type="inferred from homology"/>